<feature type="chain" id="PRO_1000014188" description="Small ribosomal subunit protein uS7">
    <location>
        <begin position="1"/>
        <end position="156"/>
    </location>
</feature>
<sequence length="156" mass="17604">MPRRRVIGQRKILPDPKFGSELLAKFVNILMVDGKKSTAESIVYSALETLAQRSGKSELEAFEVALENVRPTVEVKSRRVGGSTYQVPVEVRPVRRNALAMRWIVEAARKRGDKSMALRLANELSDAAENKGTAVKKREDVHRMAEANKAFAHYRW</sequence>
<organism>
    <name type="scientific">Escherichia coli O6:K15:H31 (strain 536 / UPEC)</name>
    <dbReference type="NCBI Taxonomy" id="362663"/>
    <lineage>
        <taxon>Bacteria</taxon>
        <taxon>Pseudomonadati</taxon>
        <taxon>Pseudomonadota</taxon>
        <taxon>Gammaproteobacteria</taxon>
        <taxon>Enterobacterales</taxon>
        <taxon>Enterobacteriaceae</taxon>
        <taxon>Escherichia</taxon>
    </lineage>
</organism>
<keyword id="KW-0687">Ribonucleoprotein</keyword>
<keyword id="KW-0689">Ribosomal protein</keyword>
<keyword id="KW-0694">RNA-binding</keyword>
<keyword id="KW-0699">rRNA-binding</keyword>
<keyword id="KW-0820">tRNA-binding</keyword>
<protein>
    <recommendedName>
        <fullName evidence="1">Small ribosomal subunit protein uS7</fullName>
    </recommendedName>
    <alternativeName>
        <fullName evidence="2">30S ribosomal protein S7</fullName>
    </alternativeName>
</protein>
<reference key="1">
    <citation type="journal article" date="2006" name="Mol. Microbiol.">
        <title>Role of pathogenicity island-associated integrases in the genome plasticity of uropathogenic Escherichia coli strain 536.</title>
        <authorList>
            <person name="Hochhut B."/>
            <person name="Wilde C."/>
            <person name="Balling G."/>
            <person name="Middendorf B."/>
            <person name="Dobrindt U."/>
            <person name="Brzuszkiewicz E."/>
            <person name="Gottschalk G."/>
            <person name="Carniel E."/>
            <person name="Hacker J."/>
        </authorList>
    </citation>
    <scope>NUCLEOTIDE SEQUENCE [LARGE SCALE GENOMIC DNA]</scope>
    <source>
        <strain>536 / UPEC</strain>
    </source>
</reference>
<dbReference type="EMBL" id="CP000247">
    <property type="protein sequence ID" value="ABG71411.1"/>
    <property type="molecule type" value="Genomic_DNA"/>
</dbReference>
<dbReference type="RefSeq" id="WP_001138043.1">
    <property type="nucleotide sequence ID" value="NC_008253.1"/>
</dbReference>
<dbReference type="SMR" id="Q0TCB8"/>
<dbReference type="GeneID" id="93778657"/>
<dbReference type="KEGG" id="ecp:ECP_3431"/>
<dbReference type="HOGENOM" id="CLU_072226_1_1_6"/>
<dbReference type="Proteomes" id="UP000009182">
    <property type="component" value="Chromosome"/>
</dbReference>
<dbReference type="GO" id="GO:0015935">
    <property type="term" value="C:small ribosomal subunit"/>
    <property type="evidence" value="ECO:0007669"/>
    <property type="project" value="InterPro"/>
</dbReference>
<dbReference type="GO" id="GO:0019843">
    <property type="term" value="F:rRNA binding"/>
    <property type="evidence" value="ECO:0007669"/>
    <property type="project" value="UniProtKB-UniRule"/>
</dbReference>
<dbReference type="GO" id="GO:0003735">
    <property type="term" value="F:structural constituent of ribosome"/>
    <property type="evidence" value="ECO:0007669"/>
    <property type="project" value="InterPro"/>
</dbReference>
<dbReference type="GO" id="GO:0000049">
    <property type="term" value="F:tRNA binding"/>
    <property type="evidence" value="ECO:0007669"/>
    <property type="project" value="UniProtKB-UniRule"/>
</dbReference>
<dbReference type="GO" id="GO:0006412">
    <property type="term" value="P:translation"/>
    <property type="evidence" value="ECO:0007669"/>
    <property type="project" value="UniProtKB-UniRule"/>
</dbReference>
<dbReference type="CDD" id="cd14869">
    <property type="entry name" value="uS7_Bacteria"/>
    <property type="match status" value="1"/>
</dbReference>
<dbReference type="FunFam" id="1.10.455.10:FF:000001">
    <property type="entry name" value="30S ribosomal protein S7"/>
    <property type="match status" value="1"/>
</dbReference>
<dbReference type="Gene3D" id="1.10.455.10">
    <property type="entry name" value="Ribosomal protein S7 domain"/>
    <property type="match status" value="1"/>
</dbReference>
<dbReference type="HAMAP" id="MF_00480_B">
    <property type="entry name" value="Ribosomal_uS7_B"/>
    <property type="match status" value="1"/>
</dbReference>
<dbReference type="InterPro" id="IPR000235">
    <property type="entry name" value="Ribosomal_uS7"/>
</dbReference>
<dbReference type="InterPro" id="IPR005717">
    <property type="entry name" value="Ribosomal_uS7_bac/org-type"/>
</dbReference>
<dbReference type="InterPro" id="IPR020606">
    <property type="entry name" value="Ribosomal_uS7_CS"/>
</dbReference>
<dbReference type="InterPro" id="IPR023798">
    <property type="entry name" value="Ribosomal_uS7_dom"/>
</dbReference>
<dbReference type="InterPro" id="IPR036823">
    <property type="entry name" value="Ribosomal_uS7_dom_sf"/>
</dbReference>
<dbReference type="NCBIfam" id="TIGR01029">
    <property type="entry name" value="rpsG_bact"/>
    <property type="match status" value="1"/>
</dbReference>
<dbReference type="PANTHER" id="PTHR11205">
    <property type="entry name" value="RIBOSOMAL PROTEIN S7"/>
    <property type="match status" value="1"/>
</dbReference>
<dbReference type="Pfam" id="PF00177">
    <property type="entry name" value="Ribosomal_S7"/>
    <property type="match status" value="1"/>
</dbReference>
<dbReference type="PIRSF" id="PIRSF002122">
    <property type="entry name" value="RPS7p_RPS7a_RPS5e_RPS7o"/>
    <property type="match status" value="1"/>
</dbReference>
<dbReference type="SUPFAM" id="SSF47973">
    <property type="entry name" value="Ribosomal protein S7"/>
    <property type="match status" value="1"/>
</dbReference>
<dbReference type="PROSITE" id="PS00052">
    <property type="entry name" value="RIBOSOMAL_S7"/>
    <property type="match status" value="1"/>
</dbReference>
<comment type="function">
    <text evidence="1">One of the primary rRNA binding proteins, it binds directly to 16S rRNA where it nucleates assembly of the head domain of the 30S subunit. Is located at the subunit interface close to the decoding center, probably blocks exit of the E-site tRNA.</text>
</comment>
<comment type="subunit">
    <text evidence="1">Part of the 30S ribosomal subunit. Contacts proteins S9 and S11.</text>
</comment>
<comment type="similarity">
    <text evidence="1">Belongs to the universal ribosomal protein uS7 family.</text>
</comment>
<evidence type="ECO:0000255" key="1">
    <source>
        <dbReference type="HAMAP-Rule" id="MF_00480"/>
    </source>
</evidence>
<evidence type="ECO:0000305" key="2"/>
<accession>Q0TCB8</accession>
<name>RS7_ECOL5</name>
<gene>
    <name evidence="1" type="primary">rpsG</name>
    <name type="ordered locus">ECP_3431</name>
</gene>
<proteinExistence type="inferred from homology"/>